<keyword id="KW-0997">Cell inner membrane</keyword>
<keyword id="KW-1003">Cell membrane</keyword>
<keyword id="KW-0472">Membrane</keyword>
<keyword id="KW-0520">NAD</keyword>
<keyword id="KW-0874">Quinone</keyword>
<keyword id="KW-1278">Translocase</keyword>
<keyword id="KW-0812">Transmembrane</keyword>
<keyword id="KW-1133">Transmembrane helix</keyword>
<keyword id="KW-0813">Transport</keyword>
<keyword id="KW-0830">Ubiquinone</keyword>
<sequence>MSLWISGIPIHYYLILAMIIFTIGVAGVMVRRSAVLIFMSVELILNSVNLVFVTFSKALYQVDGEVVVFFVMAIAAAEAAIGLAIVIAIHRIKKTSYVDEMNLMKW</sequence>
<name>NUOK_LEPBL</name>
<evidence type="ECO:0000255" key="1">
    <source>
        <dbReference type="HAMAP-Rule" id="MF_01456"/>
    </source>
</evidence>
<comment type="function">
    <text evidence="1">NDH-1 shuttles electrons from NADH, via FMN and iron-sulfur (Fe-S) centers, to quinones in the respiratory chain. The immediate electron acceptor for the enzyme in this species is believed to be ubiquinone. Couples the redox reaction to proton translocation (for every two electrons transferred, four hydrogen ions are translocated across the cytoplasmic membrane), and thus conserves the redox energy in a proton gradient.</text>
</comment>
<comment type="catalytic activity">
    <reaction evidence="1">
        <text>a quinone + NADH + 5 H(+)(in) = a quinol + NAD(+) + 4 H(+)(out)</text>
        <dbReference type="Rhea" id="RHEA:57888"/>
        <dbReference type="ChEBI" id="CHEBI:15378"/>
        <dbReference type="ChEBI" id="CHEBI:24646"/>
        <dbReference type="ChEBI" id="CHEBI:57540"/>
        <dbReference type="ChEBI" id="CHEBI:57945"/>
        <dbReference type="ChEBI" id="CHEBI:132124"/>
    </reaction>
</comment>
<comment type="subunit">
    <text evidence="1">NDH-1 is composed of 14 different subunits. Subunits NuoA, H, J, K, L, M, N constitute the membrane sector of the complex.</text>
</comment>
<comment type="subcellular location">
    <subcellularLocation>
        <location evidence="1">Cell inner membrane</location>
        <topology evidence="1">Multi-pass membrane protein</topology>
    </subcellularLocation>
</comment>
<comment type="similarity">
    <text evidence="1">Belongs to the complex I subunit 4L family.</text>
</comment>
<organism>
    <name type="scientific">Leptospira borgpetersenii serovar Hardjo-bovis (strain L550)</name>
    <dbReference type="NCBI Taxonomy" id="355276"/>
    <lineage>
        <taxon>Bacteria</taxon>
        <taxon>Pseudomonadati</taxon>
        <taxon>Spirochaetota</taxon>
        <taxon>Spirochaetia</taxon>
        <taxon>Leptospirales</taxon>
        <taxon>Leptospiraceae</taxon>
        <taxon>Leptospira</taxon>
    </lineage>
</organism>
<accession>Q04YB2</accession>
<protein>
    <recommendedName>
        <fullName evidence="1">NADH-quinone oxidoreductase subunit K</fullName>
        <ecNumber evidence="1">7.1.1.-</ecNumber>
    </recommendedName>
    <alternativeName>
        <fullName evidence="1">NADH dehydrogenase I subunit K</fullName>
    </alternativeName>
    <alternativeName>
        <fullName evidence="1">NDH-1 subunit K</fullName>
    </alternativeName>
</protein>
<gene>
    <name evidence="1" type="primary">nuoK</name>
    <name type="ordered locus">LBL_2570</name>
</gene>
<proteinExistence type="inferred from homology"/>
<dbReference type="EC" id="7.1.1.-" evidence="1"/>
<dbReference type="EMBL" id="CP000348">
    <property type="protein sequence ID" value="ABJ79933.1"/>
    <property type="molecule type" value="Genomic_DNA"/>
</dbReference>
<dbReference type="RefSeq" id="WP_002723753.1">
    <property type="nucleotide sequence ID" value="NC_008508.1"/>
</dbReference>
<dbReference type="SMR" id="Q04YB2"/>
<dbReference type="GeneID" id="61172706"/>
<dbReference type="KEGG" id="lbl:LBL_2570"/>
<dbReference type="HOGENOM" id="CLU_144724_0_0_12"/>
<dbReference type="GO" id="GO:0030964">
    <property type="term" value="C:NADH dehydrogenase complex"/>
    <property type="evidence" value="ECO:0007669"/>
    <property type="project" value="TreeGrafter"/>
</dbReference>
<dbReference type="GO" id="GO:0005886">
    <property type="term" value="C:plasma membrane"/>
    <property type="evidence" value="ECO:0007669"/>
    <property type="project" value="UniProtKB-SubCell"/>
</dbReference>
<dbReference type="GO" id="GO:0050136">
    <property type="term" value="F:NADH:ubiquinone reductase (non-electrogenic) activity"/>
    <property type="evidence" value="ECO:0007669"/>
    <property type="project" value="UniProtKB-UniRule"/>
</dbReference>
<dbReference type="GO" id="GO:0048038">
    <property type="term" value="F:quinone binding"/>
    <property type="evidence" value="ECO:0007669"/>
    <property type="project" value="UniProtKB-KW"/>
</dbReference>
<dbReference type="GO" id="GO:0042773">
    <property type="term" value="P:ATP synthesis coupled electron transport"/>
    <property type="evidence" value="ECO:0007669"/>
    <property type="project" value="InterPro"/>
</dbReference>
<dbReference type="FunFam" id="1.10.287.3510:FF:000001">
    <property type="entry name" value="NADH-quinone oxidoreductase subunit K"/>
    <property type="match status" value="1"/>
</dbReference>
<dbReference type="Gene3D" id="1.10.287.3510">
    <property type="match status" value="1"/>
</dbReference>
<dbReference type="HAMAP" id="MF_01456">
    <property type="entry name" value="NDH1_NuoK"/>
    <property type="match status" value="1"/>
</dbReference>
<dbReference type="InterPro" id="IPR001133">
    <property type="entry name" value="NADH_UbQ_OxRdtase_chain4L/K"/>
</dbReference>
<dbReference type="InterPro" id="IPR039428">
    <property type="entry name" value="NUOK/Mnh_C1-like"/>
</dbReference>
<dbReference type="NCBIfam" id="NF004320">
    <property type="entry name" value="PRK05715.1-2"/>
    <property type="match status" value="1"/>
</dbReference>
<dbReference type="PANTHER" id="PTHR11434:SF21">
    <property type="entry name" value="NADH DEHYDROGENASE SUBUNIT 4L-RELATED"/>
    <property type="match status" value="1"/>
</dbReference>
<dbReference type="PANTHER" id="PTHR11434">
    <property type="entry name" value="NADH-UBIQUINONE OXIDOREDUCTASE SUBUNIT ND4L"/>
    <property type="match status" value="1"/>
</dbReference>
<dbReference type="Pfam" id="PF00420">
    <property type="entry name" value="Oxidored_q2"/>
    <property type="match status" value="1"/>
</dbReference>
<feature type="chain" id="PRO_0000390110" description="NADH-quinone oxidoreductase subunit K">
    <location>
        <begin position="1"/>
        <end position="106"/>
    </location>
</feature>
<feature type="transmembrane region" description="Helical" evidence="1">
    <location>
        <begin position="10"/>
        <end position="30"/>
    </location>
</feature>
<feature type="transmembrane region" description="Helical" evidence="1">
    <location>
        <begin position="35"/>
        <end position="55"/>
    </location>
</feature>
<feature type="transmembrane region" description="Helical" evidence="1">
    <location>
        <begin position="67"/>
        <end position="87"/>
    </location>
</feature>
<reference key="1">
    <citation type="journal article" date="2006" name="Proc. Natl. Acad. Sci. U.S.A.">
        <title>Genome reduction in Leptospira borgpetersenii reflects limited transmission potential.</title>
        <authorList>
            <person name="Bulach D.M."/>
            <person name="Zuerner R.L."/>
            <person name="Wilson P."/>
            <person name="Seemann T."/>
            <person name="McGrath A."/>
            <person name="Cullen P.A."/>
            <person name="Davis J."/>
            <person name="Johnson M."/>
            <person name="Kuczek E."/>
            <person name="Alt D.P."/>
            <person name="Peterson-Burch B."/>
            <person name="Coppel R.L."/>
            <person name="Rood J.I."/>
            <person name="Davies J.K."/>
            <person name="Adler B."/>
        </authorList>
    </citation>
    <scope>NUCLEOTIDE SEQUENCE [LARGE SCALE GENOMIC DNA]</scope>
    <source>
        <strain>L550</strain>
    </source>
</reference>